<evidence type="ECO:0000250" key="1"/>
<evidence type="ECO:0000305" key="2"/>
<proteinExistence type="inferred from homology"/>
<sequence>MKFTLSWLKQFLEISASVTEIAEALTDIGLEVEEVIDKSKELQKFEVAYIRNIKPHPSADKLKLCDVETKNGILQIVCGASNVRADIKVVLANIGIEIPKGNLKIKESVIRGQKSYGMLCSEEELLLSSNSDGIIELPKDAVVGDNFTKYYGLDDPIFVINVTPNRGDVLGVYGIARDLSAKGLGTLKELELSEIKSTFFSKIKLNVHDKEACPLFTFREIRNLKNKPSPNWLQQLLKNVGIKTISSLVDVTNYISHSFGQPIHAYDADKIYGGISVDCYIRSDKVISCKNHEMATAVLQFSNDSANFYAINGKGYLLTENDLAIKDESGIQGLAGIIGGAKSSCNDSTTNVILEAACFNAKMVAASGRRLKIDTDARYRNERNIDRNFTEKALNIATNLILSICGNCEVSEVVKVGEQEPQKKPLDFSVYFLEKITGIKLSIQEIEDILNKLGFITDVKGDIIKVIAPSWRHDINILEDIAEEIVRIYGYDKIESIKLPELYQNNNLREYKRISSFKRILASKGYDEVVTNSFMSSEDAKLFAELKEGLFLLNPMSIEENYMRPTVLPNLISIVSKNLARDVKDMAFFEVGPSFVNLNIESTYLTAIISGAFNNKNPHSFGRNYDIFDIKGDLEQVIEYAGLSLDKCIVIDETVLPQYYHPTRAINIRLGKNLLGHFGQIHPKILKYYDINQEIFAFELNITNLPLIKAKFGKRDEFTVSDYQANFRDYSFIVDQDHKVGEIISYIKNFNKKLVKSVMLFDIYSGDKLPEGKKSIAIKIKLQADDRTLSETDLNSFSEDLVASISQKFQGILRE</sequence>
<reference key="1">
    <citation type="journal article" date="1998" name="Nature">
        <title>The genome sequence of Rickettsia prowazekii and the origin of mitochondria.</title>
        <authorList>
            <person name="Andersson S.G.E."/>
            <person name="Zomorodipour A."/>
            <person name="Andersson J.O."/>
            <person name="Sicheritz-Ponten T."/>
            <person name="Alsmark U.C.M."/>
            <person name="Podowski R.M."/>
            <person name="Naeslund A.K."/>
            <person name="Eriksson A.-S."/>
            <person name="Winkler H.H."/>
            <person name="Kurland C.G."/>
        </authorList>
    </citation>
    <scope>NUCLEOTIDE SEQUENCE [LARGE SCALE GENOMIC DNA]</scope>
    <source>
        <strain>Madrid E</strain>
    </source>
</reference>
<dbReference type="EC" id="6.1.1.20"/>
<dbReference type="EMBL" id="AJ235271">
    <property type="protein sequence ID" value="CAA14875.1"/>
    <property type="molecule type" value="Genomic_DNA"/>
</dbReference>
<dbReference type="PIR" id="A71700">
    <property type="entry name" value="A71700"/>
</dbReference>
<dbReference type="RefSeq" id="NP_220799.1">
    <property type="nucleotide sequence ID" value="NC_000963.1"/>
</dbReference>
<dbReference type="RefSeq" id="WP_004599463.1">
    <property type="nucleotide sequence ID" value="NC_000963.1"/>
</dbReference>
<dbReference type="SMR" id="Q9ZDB4"/>
<dbReference type="STRING" id="272947.gene:17555498"/>
<dbReference type="EnsemblBacteria" id="CAA14875">
    <property type="protein sequence ID" value="CAA14875"/>
    <property type="gene ID" value="CAA14875"/>
</dbReference>
<dbReference type="GeneID" id="57569543"/>
<dbReference type="KEGG" id="rpr:RP418"/>
<dbReference type="PATRIC" id="fig|272947.5.peg.431"/>
<dbReference type="eggNOG" id="COG0072">
    <property type="taxonomic scope" value="Bacteria"/>
</dbReference>
<dbReference type="eggNOG" id="COG0073">
    <property type="taxonomic scope" value="Bacteria"/>
</dbReference>
<dbReference type="HOGENOM" id="CLU_016891_0_0_5"/>
<dbReference type="OrthoDB" id="9805455at2"/>
<dbReference type="Proteomes" id="UP000002480">
    <property type="component" value="Chromosome"/>
</dbReference>
<dbReference type="GO" id="GO:0009328">
    <property type="term" value="C:phenylalanine-tRNA ligase complex"/>
    <property type="evidence" value="ECO:0007669"/>
    <property type="project" value="TreeGrafter"/>
</dbReference>
<dbReference type="GO" id="GO:0005524">
    <property type="term" value="F:ATP binding"/>
    <property type="evidence" value="ECO:0007669"/>
    <property type="project" value="UniProtKB-UniRule"/>
</dbReference>
<dbReference type="GO" id="GO:0000287">
    <property type="term" value="F:magnesium ion binding"/>
    <property type="evidence" value="ECO:0007669"/>
    <property type="project" value="UniProtKB-UniRule"/>
</dbReference>
<dbReference type="GO" id="GO:0004826">
    <property type="term" value="F:phenylalanine-tRNA ligase activity"/>
    <property type="evidence" value="ECO:0007669"/>
    <property type="project" value="UniProtKB-UniRule"/>
</dbReference>
<dbReference type="GO" id="GO:0000049">
    <property type="term" value="F:tRNA binding"/>
    <property type="evidence" value="ECO:0007669"/>
    <property type="project" value="UniProtKB-KW"/>
</dbReference>
<dbReference type="GO" id="GO:0006432">
    <property type="term" value="P:phenylalanyl-tRNA aminoacylation"/>
    <property type="evidence" value="ECO:0007669"/>
    <property type="project" value="UniProtKB-UniRule"/>
</dbReference>
<dbReference type="CDD" id="cd00769">
    <property type="entry name" value="PheRS_beta_core"/>
    <property type="match status" value="1"/>
</dbReference>
<dbReference type="CDD" id="cd02796">
    <property type="entry name" value="tRNA_bind_bactPheRS"/>
    <property type="match status" value="1"/>
</dbReference>
<dbReference type="FunFam" id="2.40.50.140:FF:000045">
    <property type="entry name" value="Phenylalanine--tRNA ligase beta subunit"/>
    <property type="match status" value="1"/>
</dbReference>
<dbReference type="Gene3D" id="3.30.56.10">
    <property type="match status" value="2"/>
</dbReference>
<dbReference type="Gene3D" id="3.30.930.10">
    <property type="entry name" value="Bira Bifunctional Protein, Domain 2"/>
    <property type="match status" value="1"/>
</dbReference>
<dbReference type="Gene3D" id="3.30.70.380">
    <property type="entry name" value="Ferrodoxin-fold anticodon-binding domain"/>
    <property type="match status" value="1"/>
</dbReference>
<dbReference type="Gene3D" id="2.40.50.140">
    <property type="entry name" value="Nucleic acid-binding proteins"/>
    <property type="match status" value="1"/>
</dbReference>
<dbReference type="Gene3D" id="3.50.40.10">
    <property type="entry name" value="Phenylalanyl-trna Synthetase, Chain B, domain 3"/>
    <property type="match status" value="1"/>
</dbReference>
<dbReference type="HAMAP" id="MF_00283">
    <property type="entry name" value="Phe_tRNA_synth_beta1"/>
    <property type="match status" value="1"/>
</dbReference>
<dbReference type="InterPro" id="IPR045864">
    <property type="entry name" value="aa-tRNA-synth_II/BPL/LPL"/>
</dbReference>
<dbReference type="InterPro" id="IPR005146">
    <property type="entry name" value="B3/B4_tRNA-bd"/>
</dbReference>
<dbReference type="InterPro" id="IPR009061">
    <property type="entry name" value="DNA-bd_dom_put_sf"/>
</dbReference>
<dbReference type="InterPro" id="IPR005121">
    <property type="entry name" value="Fdx_antiC-bd"/>
</dbReference>
<dbReference type="InterPro" id="IPR036690">
    <property type="entry name" value="Fdx_antiC-bd_sf"/>
</dbReference>
<dbReference type="InterPro" id="IPR012340">
    <property type="entry name" value="NA-bd_OB-fold"/>
</dbReference>
<dbReference type="InterPro" id="IPR045060">
    <property type="entry name" value="Phe-tRNA-ligase_IIc_bsu"/>
</dbReference>
<dbReference type="InterPro" id="IPR004532">
    <property type="entry name" value="Phe-tRNA-ligase_IIc_bsu_bact"/>
</dbReference>
<dbReference type="InterPro" id="IPR020825">
    <property type="entry name" value="Phe-tRNA_synthase-like_B3/B4"/>
</dbReference>
<dbReference type="InterPro" id="IPR041616">
    <property type="entry name" value="PheRS_beta_core"/>
</dbReference>
<dbReference type="InterPro" id="IPR002547">
    <property type="entry name" value="tRNA-bd_dom"/>
</dbReference>
<dbReference type="InterPro" id="IPR033714">
    <property type="entry name" value="tRNA_bind_bactPheRS"/>
</dbReference>
<dbReference type="InterPro" id="IPR005147">
    <property type="entry name" value="tRNA_synthase_B5-dom"/>
</dbReference>
<dbReference type="NCBIfam" id="TIGR00472">
    <property type="entry name" value="pheT_bact"/>
    <property type="match status" value="1"/>
</dbReference>
<dbReference type="NCBIfam" id="NF045760">
    <property type="entry name" value="YtpR"/>
    <property type="match status" value="1"/>
</dbReference>
<dbReference type="PANTHER" id="PTHR10947:SF0">
    <property type="entry name" value="PHENYLALANINE--TRNA LIGASE BETA SUBUNIT"/>
    <property type="match status" value="1"/>
</dbReference>
<dbReference type="PANTHER" id="PTHR10947">
    <property type="entry name" value="PHENYLALANYL-TRNA SYNTHETASE BETA CHAIN AND LEUCINE-RICH REPEAT-CONTAINING PROTEIN 47"/>
    <property type="match status" value="1"/>
</dbReference>
<dbReference type="Pfam" id="PF03483">
    <property type="entry name" value="B3_4"/>
    <property type="match status" value="1"/>
</dbReference>
<dbReference type="Pfam" id="PF03484">
    <property type="entry name" value="B5"/>
    <property type="match status" value="1"/>
</dbReference>
<dbReference type="Pfam" id="PF03147">
    <property type="entry name" value="FDX-ACB"/>
    <property type="match status" value="1"/>
</dbReference>
<dbReference type="Pfam" id="PF01588">
    <property type="entry name" value="tRNA_bind"/>
    <property type="match status" value="1"/>
</dbReference>
<dbReference type="Pfam" id="PF17759">
    <property type="entry name" value="tRNA_synthFbeta"/>
    <property type="match status" value="1"/>
</dbReference>
<dbReference type="SMART" id="SM00873">
    <property type="entry name" value="B3_4"/>
    <property type="match status" value="1"/>
</dbReference>
<dbReference type="SMART" id="SM00874">
    <property type="entry name" value="B5"/>
    <property type="match status" value="1"/>
</dbReference>
<dbReference type="SMART" id="SM00896">
    <property type="entry name" value="FDX-ACB"/>
    <property type="match status" value="1"/>
</dbReference>
<dbReference type="SUPFAM" id="SSF54991">
    <property type="entry name" value="Anticodon-binding domain of PheRS"/>
    <property type="match status" value="1"/>
</dbReference>
<dbReference type="SUPFAM" id="SSF55681">
    <property type="entry name" value="Class II aaRS and biotin synthetases"/>
    <property type="match status" value="1"/>
</dbReference>
<dbReference type="SUPFAM" id="SSF50249">
    <property type="entry name" value="Nucleic acid-binding proteins"/>
    <property type="match status" value="1"/>
</dbReference>
<dbReference type="SUPFAM" id="SSF56037">
    <property type="entry name" value="PheT/TilS domain"/>
    <property type="match status" value="1"/>
</dbReference>
<dbReference type="SUPFAM" id="SSF46955">
    <property type="entry name" value="Putative DNA-binding domain"/>
    <property type="match status" value="1"/>
</dbReference>
<dbReference type="PROSITE" id="PS51483">
    <property type="entry name" value="B5"/>
    <property type="match status" value="1"/>
</dbReference>
<dbReference type="PROSITE" id="PS51447">
    <property type="entry name" value="FDX_ACB"/>
    <property type="match status" value="1"/>
</dbReference>
<dbReference type="PROSITE" id="PS50886">
    <property type="entry name" value="TRBD"/>
    <property type="match status" value="1"/>
</dbReference>
<feature type="chain" id="PRO_0000126940" description="Phenylalanine--tRNA ligase beta subunit">
    <location>
        <begin position="1"/>
        <end position="815"/>
    </location>
</feature>
<feature type="domain" description="tRNA-binding">
    <location>
        <begin position="39"/>
        <end position="148"/>
    </location>
</feature>
<feature type="domain" description="B5">
    <location>
        <begin position="421"/>
        <end position="496"/>
    </location>
</feature>
<feature type="domain" description="FDX-ACB">
    <location>
        <begin position="721"/>
        <end position="814"/>
    </location>
</feature>
<feature type="binding site" evidence="1">
    <location>
        <position position="474"/>
    </location>
    <ligand>
        <name>Mg(2+)</name>
        <dbReference type="ChEBI" id="CHEBI:18420"/>
        <note>shared with alpha subunit</note>
    </ligand>
</feature>
<feature type="binding site" evidence="1">
    <location>
        <position position="480"/>
    </location>
    <ligand>
        <name>Mg(2+)</name>
        <dbReference type="ChEBI" id="CHEBI:18420"/>
        <note>shared with alpha subunit</note>
    </ligand>
</feature>
<feature type="binding site" evidence="1">
    <location>
        <position position="483"/>
    </location>
    <ligand>
        <name>Mg(2+)</name>
        <dbReference type="ChEBI" id="CHEBI:18420"/>
        <note>shared with alpha subunit</note>
    </ligand>
</feature>
<feature type="binding site" evidence="1">
    <location>
        <position position="484"/>
    </location>
    <ligand>
        <name>Mg(2+)</name>
        <dbReference type="ChEBI" id="CHEBI:18420"/>
        <note>shared with alpha subunit</note>
    </ligand>
</feature>
<comment type="catalytic activity">
    <reaction>
        <text>tRNA(Phe) + L-phenylalanine + ATP = L-phenylalanyl-tRNA(Phe) + AMP + diphosphate + H(+)</text>
        <dbReference type="Rhea" id="RHEA:19413"/>
        <dbReference type="Rhea" id="RHEA-COMP:9668"/>
        <dbReference type="Rhea" id="RHEA-COMP:9699"/>
        <dbReference type="ChEBI" id="CHEBI:15378"/>
        <dbReference type="ChEBI" id="CHEBI:30616"/>
        <dbReference type="ChEBI" id="CHEBI:33019"/>
        <dbReference type="ChEBI" id="CHEBI:58095"/>
        <dbReference type="ChEBI" id="CHEBI:78442"/>
        <dbReference type="ChEBI" id="CHEBI:78531"/>
        <dbReference type="ChEBI" id="CHEBI:456215"/>
        <dbReference type="EC" id="6.1.1.20"/>
    </reaction>
</comment>
<comment type="cofactor">
    <cofactor evidence="1">
        <name>Mg(2+)</name>
        <dbReference type="ChEBI" id="CHEBI:18420"/>
    </cofactor>
    <text evidence="1">Binds 2 magnesium ions per tetramer.</text>
</comment>
<comment type="subunit">
    <text evidence="1">Tetramer of two alpha and two beta subunits.</text>
</comment>
<comment type="subcellular location">
    <subcellularLocation>
        <location evidence="1">Cytoplasm</location>
    </subcellularLocation>
</comment>
<comment type="similarity">
    <text evidence="2">Belongs to the phenylalanyl-tRNA synthetase beta subunit family. Type 1 subfamily.</text>
</comment>
<keyword id="KW-0030">Aminoacyl-tRNA synthetase</keyword>
<keyword id="KW-0067">ATP-binding</keyword>
<keyword id="KW-0963">Cytoplasm</keyword>
<keyword id="KW-0436">Ligase</keyword>
<keyword id="KW-0460">Magnesium</keyword>
<keyword id="KW-0479">Metal-binding</keyword>
<keyword id="KW-0547">Nucleotide-binding</keyword>
<keyword id="KW-0648">Protein biosynthesis</keyword>
<keyword id="KW-1185">Reference proteome</keyword>
<keyword id="KW-0694">RNA-binding</keyword>
<keyword id="KW-0820">tRNA-binding</keyword>
<name>SYFB_RICPR</name>
<protein>
    <recommendedName>
        <fullName>Phenylalanine--tRNA ligase beta subunit</fullName>
        <ecNumber>6.1.1.20</ecNumber>
    </recommendedName>
    <alternativeName>
        <fullName>Phenylalanyl-tRNA synthetase beta subunit</fullName>
        <shortName>PheRS</shortName>
    </alternativeName>
</protein>
<organism>
    <name type="scientific">Rickettsia prowazekii (strain Madrid E)</name>
    <dbReference type="NCBI Taxonomy" id="272947"/>
    <lineage>
        <taxon>Bacteria</taxon>
        <taxon>Pseudomonadati</taxon>
        <taxon>Pseudomonadota</taxon>
        <taxon>Alphaproteobacteria</taxon>
        <taxon>Rickettsiales</taxon>
        <taxon>Rickettsiaceae</taxon>
        <taxon>Rickettsieae</taxon>
        <taxon>Rickettsia</taxon>
        <taxon>typhus group</taxon>
    </lineage>
</organism>
<accession>Q9ZDB4</accession>
<gene>
    <name type="primary">pheT</name>
    <name type="ordered locus">RP418</name>
</gene>